<reference key="1">
    <citation type="journal article" date="1999" name="J. Cell Sci.">
        <title>XAIP1: a Xenopus homologue of yeast actin interacting protein 1 (AIP1), which induces disassembly of actin filaments cooperatively with ADF/cofilin family proteins.</title>
        <authorList>
            <person name="Okada K."/>
            <person name="Obinata T."/>
            <person name="Abe H."/>
        </authorList>
    </citation>
    <scope>NUCLEOTIDE SEQUENCE [MRNA]</scope>
    <scope>FUNCTION</scope>
    <scope>SUBCELLULAR LOCATION</scope>
    <scope>DEVELOPMENTAL STAGE</scope>
    <source>
        <tissue>Embryo</tissue>
    </source>
</reference>
<reference key="2">
    <citation type="submission" date="2002-12" db="EMBL/GenBank/DDBJ databases">
        <authorList>
            <consortium name="NIH - Xenopus Gene Collection (XGC) project"/>
        </authorList>
    </citation>
    <scope>NUCLEOTIDE SEQUENCE [LARGE SCALE MRNA]</scope>
    <source>
        <tissue>Embryo</tissue>
    </source>
</reference>
<reference key="3">
    <citation type="journal article" date="2002" name="J. Biol. Chem.">
        <title>Xenopus actin-interacting protein 1 (XAip1) enhances cofilin fragmentation of filaments by capping filament ends.</title>
        <authorList>
            <person name="Okada K."/>
            <person name="Blanchoin L."/>
            <person name="Abe H."/>
            <person name="Chen H."/>
            <person name="Pollard T.D."/>
            <person name="Bamburg J.R."/>
        </authorList>
    </citation>
    <scope>FUNCTION</scope>
</reference>
<organism>
    <name type="scientific">Xenopus laevis</name>
    <name type="common">African clawed frog</name>
    <dbReference type="NCBI Taxonomy" id="8355"/>
    <lineage>
        <taxon>Eukaryota</taxon>
        <taxon>Metazoa</taxon>
        <taxon>Chordata</taxon>
        <taxon>Craniata</taxon>
        <taxon>Vertebrata</taxon>
        <taxon>Euteleostomi</taxon>
        <taxon>Amphibia</taxon>
        <taxon>Batrachia</taxon>
        <taxon>Anura</taxon>
        <taxon>Pipoidea</taxon>
        <taxon>Pipidae</taxon>
        <taxon>Xenopodinae</taxon>
        <taxon>Xenopus</taxon>
        <taxon>Xenopus</taxon>
    </lineage>
</organism>
<feature type="chain" id="PRO_0000051344" description="WD repeat-containing protein 1-A">
    <location>
        <begin position="1"/>
        <end position="607"/>
    </location>
</feature>
<feature type="repeat" description="WD 1">
    <location>
        <begin position="4"/>
        <end position="45"/>
    </location>
</feature>
<feature type="repeat" description="WD 2">
    <location>
        <begin position="48"/>
        <end position="87"/>
    </location>
</feature>
<feature type="repeat" description="WD 3">
    <location>
        <begin position="93"/>
        <end position="135"/>
    </location>
</feature>
<feature type="repeat" description="WD 4">
    <location>
        <begin position="138"/>
        <end position="176"/>
    </location>
</feature>
<feature type="repeat" description="WD 5">
    <location>
        <begin position="180"/>
        <end position="218"/>
    </location>
</feature>
<feature type="repeat" description="WD 6">
    <location>
        <begin position="224"/>
        <end position="263"/>
    </location>
</feature>
<feature type="repeat" description="WD 7">
    <location>
        <begin position="270"/>
        <end position="306"/>
    </location>
</feature>
<feature type="repeat" description="WD 8">
    <location>
        <begin position="311"/>
        <end position="351"/>
    </location>
</feature>
<feature type="repeat" description="WD 9">
    <location>
        <begin position="358"/>
        <end position="408"/>
    </location>
</feature>
<feature type="repeat" description="WD 10">
    <location>
        <begin position="432"/>
        <end position="474"/>
    </location>
</feature>
<feature type="repeat" description="WD 11">
    <location>
        <begin position="480"/>
        <end position="518"/>
    </location>
</feature>
<feature type="repeat" description="WD 12">
    <location>
        <begin position="523"/>
        <end position="561"/>
    </location>
</feature>
<feature type="repeat" description="WD 13">
    <location>
        <begin position="566"/>
        <end position="604"/>
    </location>
</feature>
<feature type="sequence conflict" description="In Ref. 1; AAD22062." evidence="3" ref="1">
    <original>D</original>
    <variation>G</variation>
    <location>
        <position position="553"/>
    </location>
</feature>
<proteinExistence type="evidence at transcript level"/>
<dbReference type="EMBL" id="AF124140">
    <property type="protein sequence ID" value="AAD22062.1"/>
    <property type="status" value="ALT_FRAME"/>
    <property type="molecule type" value="mRNA"/>
</dbReference>
<dbReference type="EMBL" id="BC041232">
    <property type="protein sequence ID" value="AAH41232.1"/>
    <property type="molecule type" value="mRNA"/>
</dbReference>
<dbReference type="EMBL" id="BC077202">
    <property type="protein sequence ID" value="AAH77202.1"/>
    <property type="molecule type" value="mRNA"/>
</dbReference>
<dbReference type="RefSeq" id="NP_001081923.1">
    <property type="nucleotide sequence ID" value="NM_001088454.1"/>
</dbReference>
<dbReference type="SMR" id="Q9W7F2"/>
<dbReference type="BioGRID" id="99458">
    <property type="interactions" value="2"/>
</dbReference>
<dbReference type="DNASU" id="398123"/>
<dbReference type="GeneID" id="398123"/>
<dbReference type="KEGG" id="xla:398123"/>
<dbReference type="AGR" id="Xenbase:XB-GENE-6251934"/>
<dbReference type="CTD" id="398123"/>
<dbReference type="Xenbase" id="XB-GENE-6251934">
    <property type="gene designation" value="wdr1.L"/>
</dbReference>
<dbReference type="OMA" id="GSIDTCV"/>
<dbReference type="OrthoDB" id="2306at2759"/>
<dbReference type="Proteomes" id="UP000186698">
    <property type="component" value="Chromosome 1L"/>
</dbReference>
<dbReference type="GO" id="GO:0005884">
    <property type="term" value="C:actin filament"/>
    <property type="evidence" value="ECO:0000314"/>
    <property type="project" value="UniProtKB"/>
</dbReference>
<dbReference type="GO" id="GO:0030864">
    <property type="term" value="C:cortical actin cytoskeleton"/>
    <property type="evidence" value="ECO:0000318"/>
    <property type="project" value="GO_Central"/>
</dbReference>
<dbReference type="GO" id="GO:0005737">
    <property type="term" value="C:cytoplasm"/>
    <property type="evidence" value="ECO:0000314"/>
    <property type="project" value="UniProtKB"/>
</dbReference>
<dbReference type="GO" id="GO:0005634">
    <property type="term" value="C:nucleus"/>
    <property type="evidence" value="ECO:0000314"/>
    <property type="project" value="UniProtKB"/>
</dbReference>
<dbReference type="GO" id="GO:0005886">
    <property type="term" value="C:plasma membrane"/>
    <property type="evidence" value="ECO:0000314"/>
    <property type="project" value="UniProtKB"/>
</dbReference>
<dbReference type="GO" id="GO:0003779">
    <property type="term" value="F:actin binding"/>
    <property type="evidence" value="ECO:0000250"/>
    <property type="project" value="UniProtKB"/>
</dbReference>
<dbReference type="GO" id="GO:0051015">
    <property type="term" value="F:actin filament binding"/>
    <property type="evidence" value="ECO:0000314"/>
    <property type="project" value="UniProtKB"/>
</dbReference>
<dbReference type="GO" id="GO:0030042">
    <property type="term" value="P:actin filament depolymerization"/>
    <property type="evidence" value="ECO:0000318"/>
    <property type="project" value="GO_Central"/>
</dbReference>
<dbReference type="GO" id="GO:0030043">
    <property type="term" value="P:actin filament fragmentation"/>
    <property type="evidence" value="ECO:0000314"/>
    <property type="project" value="UniProtKB"/>
</dbReference>
<dbReference type="GO" id="GO:0040011">
    <property type="term" value="P:locomotion"/>
    <property type="evidence" value="ECO:0000318"/>
    <property type="project" value="GO_Central"/>
</dbReference>
<dbReference type="GO" id="GO:0045214">
    <property type="term" value="P:sarcomere organization"/>
    <property type="evidence" value="ECO:0000318"/>
    <property type="project" value="GO_Central"/>
</dbReference>
<dbReference type="CDD" id="cd00200">
    <property type="entry name" value="WD40"/>
    <property type="match status" value="1"/>
</dbReference>
<dbReference type="FunFam" id="2.130.10.10:FF:000097">
    <property type="entry name" value="WD repeat domain 1"/>
    <property type="match status" value="1"/>
</dbReference>
<dbReference type="FunFam" id="2.130.10.10:FF:000203">
    <property type="entry name" value="WD repeat domain 1"/>
    <property type="match status" value="1"/>
</dbReference>
<dbReference type="Gene3D" id="2.130.10.10">
    <property type="entry name" value="YVTN repeat-like/Quinoprotein amine dehydrogenase"/>
    <property type="match status" value="2"/>
</dbReference>
<dbReference type="InterPro" id="IPR020472">
    <property type="entry name" value="G-protein_beta_WD-40_rep"/>
</dbReference>
<dbReference type="InterPro" id="IPR011045">
    <property type="entry name" value="N2O_reductase_N"/>
</dbReference>
<dbReference type="InterPro" id="IPR015943">
    <property type="entry name" value="WD40/YVTN_repeat-like_dom_sf"/>
</dbReference>
<dbReference type="InterPro" id="IPR019775">
    <property type="entry name" value="WD40_repeat_CS"/>
</dbReference>
<dbReference type="InterPro" id="IPR036322">
    <property type="entry name" value="WD40_repeat_dom_sf"/>
</dbReference>
<dbReference type="InterPro" id="IPR001680">
    <property type="entry name" value="WD40_rpt"/>
</dbReference>
<dbReference type="PANTHER" id="PTHR19856:SF0">
    <property type="entry name" value="WD REPEAT-CONTAINING PROTEIN 1"/>
    <property type="match status" value="1"/>
</dbReference>
<dbReference type="PANTHER" id="PTHR19856">
    <property type="entry name" value="WD-REPEATCONTAINING PROTEIN WDR1"/>
    <property type="match status" value="1"/>
</dbReference>
<dbReference type="Pfam" id="PF00400">
    <property type="entry name" value="WD40"/>
    <property type="match status" value="7"/>
</dbReference>
<dbReference type="PRINTS" id="PR00320">
    <property type="entry name" value="GPROTEINBRPT"/>
</dbReference>
<dbReference type="SMART" id="SM00320">
    <property type="entry name" value="WD40"/>
    <property type="match status" value="11"/>
</dbReference>
<dbReference type="SUPFAM" id="SSF50974">
    <property type="entry name" value="Nitrous oxide reductase, N-terminal domain"/>
    <property type="match status" value="1"/>
</dbReference>
<dbReference type="SUPFAM" id="SSF50978">
    <property type="entry name" value="WD40 repeat-like"/>
    <property type="match status" value="1"/>
</dbReference>
<dbReference type="PROSITE" id="PS00678">
    <property type="entry name" value="WD_REPEATS_1"/>
    <property type="match status" value="1"/>
</dbReference>
<dbReference type="PROSITE" id="PS50082">
    <property type="entry name" value="WD_REPEATS_2"/>
    <property type="match status" value="5"/>
</dbReference>
<dbReference type="PROSITE" id="PS50294">
    <property type="entry name" value="WD_REPEATS_REGION"/>
    <property type="match status" value="1"/>
</dbReference>
<gene>
    <name type="primary">wdr1-a</name>
    <name type="synonym">aip1</name>
</gene>
<protein>
    <recommendedName>
        <fullName>WD repeat-containing protein 1-A</fullName>
    </recommendedName>
    <alternativeName>
        <fullName>Actin-interacting protein 1-A</fullName>
        <shortName>xAIP1-A</shortName>
    </alternativeName>
</protein>
<keyword id="KW-0009">Actin-binding</keyword>
<keyword id="KW-1003">Cell membrane</keyword>
<keyword id="KW-0963">Cytoplasm</keyword>
<keyword id="KW-0206">Cytoskeleton</keyword>
<keyword id="KW-0472">Membrane</keyword>
<keyword id="KW-0539">Nucleus</keyword>
<keyword id="KW-1185">Reference proteome</keyword>
<keyword id="KW-0677">Repeat</keyword>
<keyword id="KW-0853">WD repeat</keyword>
<accession>Q9W7F2</accession>
<accession>Q6DEC6</accession>
<name>WDR1A_XENLA</name>
<comment type="function">
    <text evidence="1 2">Induces disassembly of actin filaments in conjunction with ADF/cofilin family proteins. Doesn't sever actin filaments alone, but caps the barbed ends of filaments severed by cofilin, which blocks annealing and depolymerization and allows more extensive severing by cofilin.</text>
</comment>
<comment type="subcellular location">
    <subcellularLocation>
        <location evidence="1">Cell membrane</location>
    </subcellularLocation>
    <subcellularLocation>
        <location evidence="1">Cytoplasm</location>
        <location evidence="1">Cytoskeleton</location>
    </subcellularLocation>
    <subcellularLocation>
        <location evidence="1">Nucleus</location>
    </subcellularLocation>
</comment>
<comment type="developmental stage">
    <text evidence="1">Expressed both maternally and zygotically with expression levels remaining constant throughout development.</text>
</comment>
<comment type="similarity">
    <text evidence="3">Belongs to the WD repeat AIP1 family.</text>
</comment>
<comment type="sequence caution" evidence="3">
    <conflict type="frameshift">
        <sequence resource="EMBL-CDS" id="AAD22062"/>
    </conflict>
</comment>
<evidence type="ECO:0000269" key="1">
    <source>
    </source>
</evidence>
<evidence type="ECO:0000269" key="2">
    <source>
    </source>
</evidence>
<evidence type="ECO:0000305" key="3"/>
<sequence length="607" mass="66163">MPYELKKVFASLPQMERGVAKILAGDPKGNNFLYTNGKSVIIRNIDNPAIADIYTEHAHQAVVARYAPSGFYIASGDTSGKLRIWDTTQKEHLLKYEYQPFAGKIKDIAWTEDSKRIAVVGEGREKFASVFLWDTGSSVGEITGNIKVINSVDIKQTRPYRLVTGSDDNCCAFLEGPPFKFKFTMSDHSRFVNCVRFSPDGSKLASAGADGQIFLYDGKTGEKVCSLGGSKAHDGGIYAVSWSPDGTQLLSASGDKTTKIWDVAANSAVTTFNLGSDVLDQQLGCLWQKDYLLSVSLSGYINYLDKNNPARPLRVIKGHNKSIQCMTVNNSDGRSTIYTGSHDGHINYWDAETGENDTFTGKGHTNQVSSMDLDGCNQLITCSMDDTLRYTSLISKDYSSSESVKMDVQPKCVAVGSGGYVVTVCIGQIVLLKDKKKVFAIDSLDYEPEAVAIHKGSGTVAVGGADGKVHLYSIQGNSLKDEGKTLPAKGAVTDLAYSHDGAFLAVTDANKVVTVFSVADGYSEKNSYYGHHAKALSVAWSPDNEHFASSGMDMMVYVWTLSDPDTRIKMPDAHRLHHVSSLAWLDEHTLATVSHDACVKQWTVTFK</sequence>